<evidence type="ECO:0000250" key="1"/>
<evidence type="ECO:0000250" key="2">
    <source>
        <dbReference type="UniProtKB" id="O08538"/>
    </source>
</evidence>
<evidence type="ECO:0000250" key="3">
    <source>
        <dbReference type="UniProtKB" id="Q15389"/>
    </source>
</evidence>
<evidence type="ECO:0000255" key="4"/>
<evidence type="ECO:0000255" key="5">
    <source>
        <dbReference type="PROSITE-ProRule" id="PRU00739"/>
    </source>
</evidence>
<reference key="1">
    <citation type="journal article" date="2001" name="Cardiovasc. Res.">
        <title>The angiopoietin-tie2 system in coronary artery endothelium prevents oxidized low-density lipoprotein-induced apoptosis.</title>
        <authorList>
            <person name="Kim I."/>
            <person name="Moon S.O."/>
            <person name="Han C.Y."/>
            <person name="Pak Y.K."/>
            <person name="Moon S.K."/>
            <person name="Kim J.J."/>
            <person name="Koh G.Y."/>
        </authorList>
    </citation>
    <scope>NUCLEOTIDE SEQUENCE [MRNA]</scope>
</reference>
<proteinExistence type="evidence at transcript level"/>
<gene>
    <name type="primary">ANGPT1</name>
</gene>
<accession>Q9BDY8</accession>
<organism>
    <name type="scientific">Sus scrofa</name>
    <name type="common">Pig</name>
    <dbReference type="NCBI Taxonomy" id="9823"/>
    <lineage>
        <taxon>Eukaryota</taxon>
        <taxon>Metazoa</taxon>
        <taxon>Chordata</taxon>
        <taxon>Craniata</taxon>
        <taxon>Vertebrata</taxon>
        <taxon>Euteleostomi</taxon>
        <taxon>Mammalia</taxon>
        <taxon>Eutheria</taxon>
        <taxon>Laurasiatheria</taxon>
        <taxon>Artiodactyla</taxon>
        <taxon>Suina</taxon>
        <taxon>Suidae</taxon>
        <taxon>Sus</taxon>
    </lineage>
</organism>
<feature type="signal peptide" evidence="4">
    <location>
        <begin position="1"/>
        <end position="19"/>
    </location>
</feature>
<feature type="chain" id="PRO_0000278834" description="Angiopoietin-1">
    <location>
        <begin position="20"/>
        <end position="498"/>
    </location>
</feature>
<feature type="domain" description="Fibrinogen C-terminal" evidence="5">
    <location>
        <begin position="277"/>
        <end position="497"/>
    </location>
</feature>
<feature type="coiled-coil region" evidence="4">
    <location>
        <begin position="158"/>
        <end position="254"/>
    </location>
</feature>
<feature type="glycosylation site" description="N-linked (GlcNAc...) asparagine" evidence="4">
    <location>
        <position position="92"/>
    </location>
</feature>
<feature type="glycosylation site" description="N-linked (GlcNAc...) asparagine" evidence="4">
    <location>
        <position position="122"/>
    </location>
</feature>
<feature type="glycosylation site" description="N-linked (GlcNAc...) asparagine" evidence="4">
    <location>
        <position position="154"/>
    </location>
</feature>
<feature type="glycosylation site" description="N-linked (GlcNAc...) asparagine" evidence="4">
    <location>
        <position position="243"/>
    </location>
</feature>
<feature type="glycosylation site" description="N-linked (GlcNAc...) asparagine" evidence="4">
    <location>
        <position position="295"/>
    </location>
</feature>
<feature type="disulfide bond" evidence="5">
    <location>
        <begin position="286"/>
        <end position="315"/>
    </location>
</feature>
<feature type="disulfide bond" evidence="5">
    <location>
        <begin position="439"/>
        <end position="452"/>
    </location>
</feature>
<sequence length="498" mass="57413">MTVFLSFAFLAAILTHIGCSNQRRSPENGGRRYNRIQHGQCAYTFILPEHDGNCRESTTDQYNTNALQRDAPHVEQDFSSQKLQHLEHVMENYTQWLQKIENYIVENMKSEMAQIQQNAVQNHTATMLEIGTSLLSQTAEQTRKLTDVETQVLNQTSRLEIQLLENSLSTYKLEKQLLQQTNEILKIHEKNSLLEHKILEMEGKHKEELDTLKEEKENLQGLVTRQTYIIQELKKQLNRATTNNSVLQKQQLELMDTVHNLVNLCTKEGVLLKGGKKEEVKPFRDCADVYQAGFNKSGIYTIYINNMPEPKKVFCNMDLNGGGWTVIQHREDGSLDFQRGWKEYKMGFGNPSGEYWLGNEFIFAITSQRQYTLRTELMDWEGNRAYSQYDRFHIGNEKQNYRLYLKGHSGTAGKQSSLILHGADFSTKDADNDNCMCKCALMLTGGWWFDACGPSNLNGMFYTAGQNHGKLNGIKWHYFKGPSYSLRSTTMMIRPLDF</sequence>
<keyword id="KW-0037">Angiogenesis</keyword>
<keyword id="KW-0175">Coiled coil</keyword>
<keyword id="KW-0217">Developmental protein</keyword>
<keyword id="KW-0221">Differentiation</keyword>
<keyword id="KW-1015">Disulfide bond</keyword>
<keyword id="KW-0325">Glycoprotein</keyword>
<keyword id="KW-1185">Reference proteome</keyword>
<keyword id="KW-0964">Secreted</keyword>
<keyword id="KW-0732">Signal</keyword>
<name>ANGP1_PIG</name>
<comment type="function">
    <text evidence="1">Binds and activates TIE2 receptor by inducing its tyrosine phosphorylation. Implicated in endothelial developmental processes later and distinct from that of VEGF. Appears to play a crucial role in mediating reciprocal interactions between the endothelium and surrounding matrix and mesenchyme. Mediates blood vessel maturation/stability. It may play an important role in the heart early development (By similarity).</text>
</comment>
<comment type="subunit">
    <text evidence="2 3">Homooligomer (By similarity). Interacts with TEK/TIE2 (By similarity). Interacts with SVEP1/polydom (By similarity). Interacts with THBD; this interaction significantly inhibits the generation of activated PC and TAFIa/CPB2 by the thrombin/thrombomodulin complex (By similarity).</text>
</comment>
<comment type="subcellular location">
    <subcellularLocation>
        <location evidence="2">Secreted</location>
    </subcellularLocation>
</comment>
<dbReference type="EMBL" id="AF233227">
    <property type="protein sequence ID" value="AAK14992.1"/>
    <property type="molecule type" value="mRNA"/>
</dbReference>
<dbReference type="RefSeq" id="NP_999124.1">
    <property type="nucleotide sequence ID" value="NM_213959.1"/>
</dbReference>
<dbReference type="SMR" id="Q9BDY8"/>
<dbReference type="FunCoup" id="Q9BDY8">
    <property type="interactions" value="344"/>
</dbReference>
<dbReference type="STRING" id="9823.ENSSSCP00000065500"/>
<dbReference type="GlyCosmos" id="Q9BDY8">
    <property type="glycosylation" value="5 sites, No reported glycans"/>
</dbReference>
<dbReference type="GlyGen" id="Q9BDY8">
    <property type="glycosylation" value="5 sites"/>
</dbReference>
<dbReference type="PaxDb" id="9823-ENSSSCP00000006448"/>
<dbReference type="GeneID" id="397009"/>
<dbReference type="KEGG" id="ssc:397009"/>
<dbReference type="CTD" id="284"/>
<dbReference type="eggNOG" id="KOG2579">
    <property type="taxonomic scope" value="Eukaryota"/>
</dbReference>
<dbReference type="InParanoid" id="Q9BDY8"/>
<dbReference type="OrthoDB" id="7735366at2759"/>
<dbReference type="Proteomes" id="UP000008227">
    <property type="component" value="Unplaced"/>
</dbReference>
<dbReference type="Proteomes" id="UP000314985">
    <property type="component" value="Unplaced"/>
</dbReference>
<dbReference type="Proteomes" id="UP000694570">
    <property type="component" value="Unplaced"/>
</dbReference>
<dbReference type="Proteomes" id="UP000694571">
    <property type="component" value="Unplaced"/>
</dbReference>
<dbReference type="Proteomes" id="UP000694720">
    <property type="component" value="Unplaced"/>
</dbReference>
<dbReference type="Proteomes" id="UP000694722">
    <property type="component" value="Unplaced"/>
</dbReference>
<dbReference type="Proteomes" id="UP000694723">
    <property type="component" value="Unplaced"/>
</dbReference>
<dbReference type="Proteomes" id="UP000694724">
    <property type="component" value="Unplaced"/>
</dbReference>
<dbReference type="Proteomes" id="UP000694725">
    <property type="component" value="Unplaced"/>
</dbReference>
<dbReference type="Proteomes" id="UP000694726">
    <property type="component" value="Unplaced"/>
</dbReference>
<dbReference type="Proteomes" id="UP000694727">
    <property type="component" value="Unplaced"/>
</dbReference>
<dbReference type="Proteomes" id="UP000694728">
    <property type="component" value="Unplaced"/>
</dbReference>
<dbReference type="GO" id="GO:0062023">
    <property type="term" value="C:collagen-containing extracellular matrix"/>
    <property type="evidence" value="ECO:0000318"/>
    <property type="project" value="GO_Central"/>
</dbReference>
<dbReference type="GO" id="GO:0005615">
    <property type="term" value="C:extracellular space"/>
    <property type="evidence" value="ECO:0000318"/>
    <property type="project" value="GO_Central"/>
</dbReference>
<dbReference type="GO" id="GO:0030971">
    <property type="term" value="F:receptor tyrosine kinase binding"/>
    <property type="evidence" value="ECO:0000318"/>
    <property type="project" value="GO_Central"/>
</dbReference>
<dbReference type="GO" id="GO:0001525">
    <property type="term" value="P:angiogenesis"/>
    <property type="evidence" value="ECO:0000318"/>
    <property type="project" value="GO_Central"/>
</dbReference>
<dbReference type="GO" id="GO:0007596">
    <property type="term" value="P:blood coagulation"/>
    <property type="evidence" value="ECO:0007669"/>
    <property type="project" value="InterPro"/>
</dbReference>
<dbReference type="GO" id="GO:0030154">
    <property type="term" value="P:cell differentiation"/>
    <property type="evidence" value="ECO:0007669"/>
    <property type="project" value="UniProtKB-KW"/>
</dbReference>
<dbReference type="GO" id="GO:0048014">
    <property type="term" value="P:Tie signaling pathway"/>
    <property type="evidence" value="ECO:0000318"/>
    <property type="project" value="GO_Central"/>
</dbReference>
<dbReference type="CDD" id="cd00087">
    <property type="entry name" value="FReD"/>
    <property type="match status" value="1"/>
</dbReference>
<dbReference type="FunFam" id="3.90.215.10:FF:000005">
    <property type="entry name" value="angiopoietin-1 isoform X2"/>
    <property type="match status" value="1"/>
</dbReference>
<dbReference type="FunFam" id="4.10.530.10:FF:000001">
    <property type="entry name" value="angiopoietin-2 isoform X1"/>
    <property type="match status" value="1"/>
</dbReference>
<dbReference type="Gene3D" id="3.90.215.10">
    <property type="entry name" value="Gamma Fibrinogen, chain A, domain 1"/>
    <property type="match status" value="1"/>
</dbReference>
<dbReference type="Gene3D" id="4.10.530.10">
    <property type="entry name" value="Gamma-fibrinogen Carboxyl Terminal Fragment, domain 2"/>
    <property type="match status" value="1"/>
</dbReference>
<dbReference type="InterPro" id="IPR037579">
    <property type="entry name" value="FIB_ANG-like"/>
</dbReference>
<dbReference type="InterPro" id="IPR036056">
    <property type="entry name" value="Fibrinogen-like_C"/>
</dbReference>
<dbReference type="InterPro" id="IPR014716">
    <property type="entry name" value="Fibrinogen_a/b/g_C_1"/>
</dbReference>
<dbReference type="InterPro" id="IPR002181">
    <property type="entry name" value="Fibrinogen_a/b/g_C_dom"/>
</dbReference>
<dbReference type="InterPro" id="IPR020837">
    <property type="entry name" value="Fibrinogen_CS"/>
</dbReference>
<dbReference type="NCBIfam" id="NF040941">
    <property type="entry name" value="GGGWT_bact"/>
    <property type="match status" value="1"/>
</dbReference>
<dbReference type="PANTHER" id="PTHR47221">
    <property type="entry name" value="FIBRINOGEN ALPHA CHAIN"/>
    <property type="match status" value="1"/>
</dbReference>
<dbReference type="PANTHER" id="PTHR47221:SF6">
    <property type="entry name" value="FIBRINOGEN ALPHA CHAIN"/>
    <property type="match status" value="1"/>
</dbReference>
<dbReference type="Pfam" id="PF25443">
    <property type="entry name" value="ANG-1"/>
    <property type="match status" value="1"/>
</dbReference>
<dbReference type="Pfam" id="PF00147">
    <property type="entry name" value="Fibrinogen_C"/>
    <property type="match status" value="1"/>
</dbReference>
<dbReference type="SMART" id="SM00186">
    <property type="entry name" value="FBG"/>
    <property type="match status" value="1"/>
</dbReference>
<dbReference type="SUPFAM" id="SSF56496">
    <property type="entry name" value="Fibrinogen C-terminal domain-like"/>
    <property type="match status" value="1"/>
</dbReference>
<dbReference type="PROSITE" id="PS00514">
    <property type="entry name" value="FIBRINOGEN_C_1"/>
    <property type="match status" value="1"/>
</dbReference>
<dbReference type="PROSITE" id="PS51406">
    <property type="entry name" value="FIBRINOGEN_C_2"/>
    <property type="match status" value="1"/>
</dbReference>
<protein>
    <recommendedName>
        <fullName>Angiopoietin-1</fullName>
        <shortName>ANG-1</shortName>
    </recommendedName>
</protein>